<keyword id="KW-0028">Amino-acid biosynthesis</keyword>
<keyword id="KW-0055">Arginine biosynthesis</keyword>
<keyword id="KW-0963">Cytoplasm</keyword>
<keyword id="KW-0808">Transferase</keyword>
<name>OTC_METMA</name>
<dbReference type="EC" id="2.1.3.3" evidence="2"/>
<dbReference type="EMBL" id="AE008384">
    <property type="protein sequence ID" value="AAM29841.1"/>
    <property type="status" value="ALT_INIT"/>
    <property type="molecule type" value="Genomic_DNA"/>
</dbReference>
<dbReference type="RefSeq" id="WP_011032099.1">
    <property type="nucleotide sequence ID" value="NC_003901.1"/>
</dbReference>
<dbReference type="SMR" id="Q8Q0J1"/>
<dbReference type="GeneID" id="82159122"/>
<dbReference type="KEGG" id="mma:MM_0145"/>
<dbReference type="PATRIC" id="fig|192952.21.peg.168"/>
<dbReference type="eggNOG" id="arCOG00912">
    <property type="taxonomic scope" value="Archaea"/>
</dbReference>
<dbReference type="HOGENOM" id="CLU_043846_3_2_2"/>
<dbReference type="UniPathway" id="UPA00068">
    <property type="reaction ID" value="UER00112"/>
</dbReference>
<dbReference type="Proteomes" id="UP000000595">
    <property type="component" value="Chromosome"/>
</dbReference>
<dbReference type="GO" id="GO:0005737">
    <property type="term" value="C:cytoplasm"/>
    <property type="evidence" value="ECO:0007669"/>
    <property type="project" value="UniProtKB-SubCell"/>
</dbReference>
<dbReference type="GO" id="GO:0016597">
    <property type="term" value="F:amino acid binding"/>
    <property type="evidence" value="ECO:0007669"/>
    <property type="project" value="InterPro"/>
</dbReference>
<dbReference type="GO" id="GO:0004585">
    <property type="term" value="F:ornithine carbamoyltransferase activity"/>
    <property type="evidence" value="ECO:0007669"/>
    <property type="project" value="UniProtKB-UniRule"/>
</dbReference>
<dbReference type="GO" id="GO:0042450">
    <property type="term" value="P:arginine biosynthetic process via ornithine"/>
    <property type="evidence" value="ECO:0007669"/>
    <property type="project" value="TreeGrafter"/>
</dbReference>
<dbReference type="GO" id="GO:0019240">
    <property type="term" value="P:citrulline biosynthetic process"/>
    <property type="evidence" value="ECO:0007669"/>
    <property type="project" value="TreeGrafter"/>
</dbReference>
<dbReference type="GO" id="GO:0006526">
    <property type="term" value="P:L-arginine biosynthetic process"/>
    <property type="evidence" value="ECO:0007669"/>
    <property type="project" value="UniProtKB-UniRule"/>
</dbReference>
<dbReference type="FunFam" id="3.40.50.1370:FF:000008">
    <property type="entry name" value="Ornithine carbamoyltransferase"/>
    <property type="match status" value="1"/>
</dbReference>
<dbReference type="FunFam" id="3.40.50.1370:FF:000016">
    <property type="entry name" value="Ornithine carbamoyltransferase"/>
    <property type="match status" value="1"/>
</dbReference>
<dbReference type="Gene3D" id="3.40.50.1370">
    <property type="entry name" value="Aspartate/ornithine carbamoyltransferase"/>
    <property type="match status" value="2"/>
</dbReference>
<dbReference type="HAMAP" id="MF_01109">
    <property type="entry name" value="OTCase"/>
    <property type="match status" value="1"/>
</dbReference>
<dbReference type="InterPro" id="IPR006132">
    <property type="entry name" value="Asp/Orn_carbamoyltranf_P-bd"/>
</dbReference>
<dbReference type="InterPro" id="IPR006130">
    <property type="entry name" value="Asp/Orn_carbamoylTrfase"/>
</dbReference>
<dbReference type="InterPro" id="IPR036901">
    <property type="entry name" value="Asp/Orn_carbamoylTrfase_sf"/>
</dbReference>
<dbReference type="InterPro" id="IPR006131">
    <property type="entry name" value="Asp_carbamoyltransf_Asp/Orn-bd"/>
</dbReference>
<dbReference type="InterPro" id="IPR002292">
    <property type="entry name" value="Orn/put_carbamltrans"/>
</dbReference>
<dbReference type="InterPro" id="IPR024904">
    <property type="entry name" value="OTCase_ArgI"/>
</dbReference>
<dbReference type="NCBIfam" id="TIGR00658">
    <property type="entry name" value="orni_carb_tr"/>
    <property type="match status" value="1"/>
</dbReference>
<dbReference type="NCBIfam" id="NF001986">
    <property type="entry name" value="PRK00779.1"/>
    <property type="match status" value="1"/>
</dbReference>
<dbReference type="PANTHER" id="PTHR45753">
    <property type="entry name" value="ORNITHINE CARBAMOYLTRANSFERASE, MITOCHONDRIAL"/>
    <property type="match status" value="1"/>
</dbReference>
<dbReference type="PANTHER" id="PTHR45753:SF3">
    <property type="entry name" value="ORNITHINE TRANSCARBAMYLASE, MITOCHONDRIAL"/>
    <property type="match status" value="1"/>
</dbReference>
<dbReference type="Pfam" id="PF00185">
    <property type="entry name" value="OTCace"/>
    <property type="match status" value="1"/>
</dbReference>
<dbReference type="Pfam" id="PF02729">
    <property type="entry name" value="OTCace_N"/>
    <property type="match status" value="1"/>
</dbReference>
<dbReference type="PRINTS" id="PR00100">
    <property type="entry name" value="AOTCASE"/>
</dbReference>
<dbReference type="PRINTS" id="PR00102">
    <property type="entry name" value="OTCASE"/>
</dbReference>
<dbReference type="SUPFAM" id="SSF53671">
    <property type="entry name" value="Aspartate/ornithine carbamoyltransferase"/>
    <property type="match status" value="1"/>
</dbReference>
<dbReference type="PROSITE" id="PS00097">
    <property type="entry name" value="CARBAMOYLTRANSFERASE"/>
    <property type="match status" value="1"/>
</dbReference>
<protein>
    <recommendedName>
        <fullName evidence="2">Ornithine carbamoyltransferase</fullName>
        <shortName evidence="2">OTCase</shortName>
        <ecNumber evidence="2">2.1.3.3</ecNumber>
    </recommendedName>
</protein>
<feature type="chain" id="PRO_0000113067" description="Ornithine carbamoyltransferase">
    <location>
        <begin position="1"/>
        <end position="302"/>
    </location>
</feature>
<feature type="binding site" evidence="2">
    <location>
        <begin position="52"/>
        <end position="55"/>
    </location>
    <ligand>
        <name>carbamoyl phosphate</name>
        <dbReference type="ChEBI" id="CHEBI:58228"/>
    </ligand>
</feature>
<feature type="binding site" evidence="2">
    <location>
        <position position="79"/>
    </location>
    <ligand>
        <name>carbamoyl phosphate</name>
        <dbReference type="ChEBI" id="CHEBI:58228"/>
    </ligand>
</feature>
<feature type="binding site" evidence="2">
    <location>
        <position position="103"/>
    </location>
    <ligand>
        <name>carbamoyl phosphate</name>
        <dbReference type="ChEBI" id="CHEBI:58228"/>
    </ligand>
</feature>
<feature type="binding site" evidence="2">
    <location>
        <begin position="130"/>
        <end position="133"/>
    </location>
    <ligand>
        <name>carbamoyl phosphate</name>
        <dbReference type="ChEBI" id="CHEBI:58228"/>
    </ligand>
</feature>
<feature type="binding site" evidence="2">
    <location>
        <position position="161"/>
    </location>
    <ligand>
        <name>L-ornithine</name>
        <dbReference type="ChEBI" id="CHEBI:46911"/>
    </ligand>
</feature>
<feature type="binding site" evidence="2">
    <location>
        <position position="221"/>
    </location>
    <ligand>
        <name>L-ornithine</name>
        <dbReference type="ChEBI" id="CHEBI:46911"/>
    </ligand>
</feature>
<feature type="binding site" evidence="2">
    <location>
        <begin position="225"/>
        <end position="226"/>
    </location>
    <ligand>
        <name>L-ornithine</name>
        <dbReference type="ChEBI" id="CHEBI:46911"/>
    </ligand>
</feature>
<feature type="binding site" evidence="2">
    <location>
        <begin position="261"/>
        <end position="262"/>
    </location>
    <ligand>
        <name>carbamoyl phosphate</name>
        <dbReference type="ChEBI" id="CHEBI:58228"/>
    </ligand>
</feature>
<feature type="binding site" evidence="2">
    <location>
        <position position="289"/>
    </location>
    <ligand>
        <name>carbamoyl phosphate</name>
        <dbReference type="ChEBI" id="CHEBI:58228"/>
    </ligand>
</feature>
<gene>
    <name evidence="2" type="primary">argF</name>
    <name type="ordered locus">MM_0145</name>
</gene>
<evidence type="ECO:0000250" key="1"/>
<evidence type="ECO:0000255" key="2">
    <source>
        <dbReference type="HAMAP-Rule" id="MF_01109"/>
    </source>
</evidence>
<evidence type="ECO:0000305" key="3"/>
<accession>Q8Q0J1</accession>
<comment type="function">
    <text evidence="1">Reversibly catalyzes the transfer of the carbamoyl group from carbamoyl phosphate (CP) to the N(epsilon) atom of ornithine (ORN) to produce L-citrulline.</text>
</comment>
<comment type="catalytic activity">
    <reaction evidence="2">
        <text>carbamoyl phosphate + L-ornithine = L-citrulline + phosphate + H(+)</text>
        <dbReference type="Rhea" id="RHEA:19513"/>
        <dbReference type="ChEBI" id="CHEBI:15378"/>
        <dbReference type="ChEBI" id="CHEBI:43474"/>
        <dbReference type="ChEBI" id="CHEBI:46911"/>
        <dbReference type="ChEBI" id="CHEBI:57743"/>
        <dbReference type="ChEBI" id="CHEBI:58228"/>
        <dbReference type="EC" id="2.1.3.3"/>
    </reaction>
</comment>
<comment type="pathway">
    <text evidence="2">Amino-acid biosynthesis; L-arginine biosynthesis; L-arginine from L-ornithine and carbamoyl phosphate: step 1/3.</text>
</comment>
<comment type="subcellular location">
    <subcellularLocation>
        <location evidence="2">Cytoplasm</location>
    </subcellularLocation>
</comment>
<comment type="similarity">
    <text evidence="2">Belongs to the aspartate/ornithine carbamoyltransferase superfamily. OTCase family.</text>
</comment>
<comment type="sequence caution" evidence="3">
    <conflict type="erroneous initiation">
        <sequence resource="EMBL-CDS" id="AAM29841"/>
    </conflict>
</comment>
<organism>
    <name type="scientific">Methanosarcina mazei (strain ATCC BAA-159 / DSM 3647 / Goe1 / Go1 / JCM 11833 / OCM 88)</name>
    <name type="common">Methanosarcina frisia</name>
    <dbReference type="NCBI Taxonomy" id="192952"/>
    <lineage>
        <taxon>Archaea</taxon>
        <taxon>Methanobacteriati</taxon>
        <taxon>Methanobacteriota</taxon>
        <taxon>Stenosarchaea group</taxon>
        <taxon>Methanomicrobia</taxon>
        <taxon>Methanosarcinales</taxon>
        <taxon>Methanosarcinaceae</taxon>
        <taxon>Methanosarcina</taxon>
    </lineage>
</organism>
<sequence>MKRDVLSITDLSREEIYELLESAADLKKKRKAGEPTEYLKHKSLGMIFEKSSTRTRVSFEVAMSDFGGHALYLNSRDIQVGRGETIEDTARTLSGYLHGIMARVMSHDTVEKLARFSTIPVINALSDREHPCQILGDFMTIMEYKNRFEGLKFAWIGDGNNVCNSALLGSAIMGMEFVIACPEGYEPGAEFLEKAKALGGKFSITDDPKTAAKDADIIYTDVWVSMGDEAEQEKRLKDFGSFQVNTELLGVAKPDVIVMHCLPARRGLEITDEVMDGPNSVIFEEAENRLHAQKALILKLMR</sequence>
<proteinExistence type="inferred from homology"/>
<reference key="1">
    <citation type="journal article" date="2002" name="J. Mol. Microbiol. Biotechnol.">
        <title>The genome of Methanosarcina mazei: evidence for lateral gene transfer between Bacteria and Archaea.</title>
        <authorList>
            <person name="Deppenmeier U."/>
            <person name="Johann A."/>
            <person name="Hartsch T."/>
            <person name="Merkl R."/>
            <person name="Schmitz R.A."/>
            <person name="Martinez-Arias R."/>
            <person name="Henne A."/>
            <person name="Wiezer A."/>
            <person name="Baeumer S."/>
            <person name="Jacobi C."/>
            <person name="Brueggemann H."/>
            <person name="Lienard T."/>
            <person name="Christmann A."/>
            <person name="Boemecke M."/>
            <person name="Steckel S."/>
            <person name="Bhattacharyya A."/>
            <person name="Lykidis A."/>
            <person name="Overbeek R."/>
            <person name="Klenk H.-P."/>
            <person name="Gunsalus R.P."/>
            <person name="Fritz H.-J."/>
            <person name="Gottschalk G."/>
        </authorList>
    </citation>
    <scope>NUCLEOTIDE SEQUENCE [LARGE SCALE GENOMIC DNA]</scope>
    <source>
        <strain>ATCC BAA-159 / DSM 3647 / Goe1 / Go1 / JCM 11833 / OCM 88</strain>
    </source>
</reference>